<dbReference type="EC" id="3.1.1.5"/>
<dbReference type="EMBL" id="AAHF01000016">
    <property type="protein sequence ID" value="EAL84448.1"/>
    <property type="molecule type" value="Genomic_DNA"/>
</dbReference>
<dbReference type="RefSeq" id="XP_746486.1">
    <property type="nucleotide sequence ID" value="XM_741393.1"/>
</dbReference>
<dbReference type="SMR" id="Q4WA15"/>
<dbReference type="FunCoup" id="Q4WA15">
    <property type="interactions" value="114"/>
</dbReference>
<dbReference type="STRING" id="330879.Q4WA15"/>
<dbReference type="EnsemblFungi" id="EAL84448">
    <property type="protein sequence ID" value="EAL84448"/>
    <property type="gene ID" value="AFUA_4G03000"/>
</dbReference>
<dbReference type="GeneID" id="3503855"/>
<dbReference type="KEGG" id="afm:AFUA_4G03000"/>
<dbReference type="VEuPathDB" id="FungiDB:Afu4g03000"/>
<dbReference type="eggNOG" id="KOG2968">
    <property type="taxonomic scope" value="Eukaryota"/>
</dbReference>
<dbReference type="HOGENOM" id="CLU_000960_1_1_1"/>
<dbReference type="InParanoid" id="Q4WA15"/>
<dbReference type="OMA" id="SSGYVWR"/>
<dbReference type="OrthoDB" id="421051at2759"/>
<dbReference type="Proteomes" id="UP000002530">
    <property type="component" value="Chromosome 4"/>
</dbReference>
<dbReference type="GO" id="GO:0005783">
    <property type="term" value="C:endoplasmic reticulum"/>
    <property type="evidence" value="ECO:0000318"/>
    <property type="project" value="GO_Central"/>
</dbReference>
<dbReference type="GO" id="GO:0005789">
    <property type="term" value="C:endoplasmic reticulum membrane"/>
    <property type="evidence" value="ECO:0007669"/>
    <property type="project" value="UniProtKB-SubCell"/>
</dbReference>
<dbReference type="GO" id="GO:0004622">
    <property type="term" value="F:lysophospholipase activity"/>
    <property type="evidence" value="ECO:0000318"/>
    <property type="project" value="GO_Central"/>
</dbReference>
<dbReference type="GO" id="GO:0034638">
    <property type="term" value="P:phosphatidylcholine catabolic process"/>
    <property type="evidence" value="ECO:0007669"/>
    <property type="project" value="EnsemblFungi"/>
</dbReference>
<dbReference type="GO" id="GO:0071071">
    <property type="term" value="P:regulation of phospholipid biosynthetic process"/>
    <property type="evidence" value="ECO:0007669"/>
    <property type="project" value="EnsemblFungi"/>
</dbReference>
<dbReference type="CDD" id="cd00038">
    <property type="entry name" value="CAP_ED"/>
    <property type="match status" value="2"/>
</dbReference>
<dbReference type="FunFam" id="2.60.120.10:FF:000062">
    <property type="entry name" value="Lysophospholipase NTE1"/>
    <property type="match status" value="1"/>
</dbReference>
<dbReference type="FunFam" id="3.40.1090.10:FF:000007">
    <property type="entry name" value="Lysophospholipase NTE1"/>
    <property type="match status" value="1"/>
</dbReference>
<dbReference type="FunFam" id="3.40.1090.10:FF:000013">
    <property type="entry name" value="Lysophospholipase NTE1"/>
    <property type="match status" value="1"/>
</dbReference>
<dbReference type="Gene3D" id="3.40.1090.10">
    <property type="entry name" value="Cytosolic phospholipase A2 catalytic domain"/>
    <property type="match status" value="2"/>
</dbReference>
<dbReference type="Gene3D" id="2.60.120.10">
    <property type="entry name" value="Jelly Rolls"/>
    <property type="match status" value="3"/>
</dbReference>
<dbReference type="InterPro" id="IPR016035">
    <property type="entry name" value="Acyl_Trfase/lysoPLipase"/>
</dbReference>
<dbReference type="InterPro" id="IPR000595">
    <property type="entry name" value="cNMP-bd_dom"/>
</dbReference>
<dbReference type="InterPro" id="IPR018490">
    <property type="entry name" value="cNMP-bd_dom_sf"/>
</dbReference>
<dbReference type="InterPro" id="IPR001423">
    <property type="entry name" value="LysoPLipase_patatin_CS"/>
</dbReference>
<dbReference type="InterPro" id="IPR050301">
    <property type="entry name" value="NTE"/>
</dbReference>
<dbReference type="InterPro" id="IPR056556">
    <property type="entry name" value="NTE1_P-loop_dom"/>
</dbReference>
<dbReference type="InterPro" id="IPR002641">
    <property type="entry name" value="PNPLA_dom"/>
</dbReference>
<dbReference type="InterPro" id="IPR014710">
    <property type="entry name" value="RmlC-like_jellyroll"/>
</dbReference>
<dbReference type="PANTHER" id="PTHR14226:SF29">
    <property type="entry name" value="NEUROPATHY TARGET ESTERASE SWS"/>
    <property type="match status" value="1"/>
</dbReference>
<dbReference type="PANTHER" id="PTHR14226">
    <property type="entry name" value="NEUROPATHY TARGET ESTERASE/SWISS CHEESE D.MELANOGASTER"/>
    <property type="match status" value="1"/>
</dbReference>
<dbReference type="Pfam" id="PF00027">
    <property type="entry name" value="cNMP_binding"/>
    <property type="match status" value="1"/>
</dbReference>
<dbReference type="Pfam" id="PF24179">
    <property type="entry name" value="NTE_Ploop"/>
    <property type="match status" value="1"/>
</dbReference>
<dbReference type="Pfam" id="PF01734">
    <property type="entry name" value="Patatin"/>
    <property type="match status" value="1"/>
</dbReference>
<dbReference type="SMART" id="SM00100">
    <property type="entry name" value="cNMP"/>
    <property type="match status" value="2"/>
</dbReference>
<dbReference type="SUPFAM" id="SSF51206">
    <property type="entry name" value="cAMP-binding domain-like"/>
    <property type="match status" value="3"/>
</dbReference>
<dbReference type="SUPFAM" id="SSF52151">
    <property type="entry name" value="FabD/lysophospholipase-like"/>
    <property type="match status" value="1"/>
</dbReference>
<dbReference type="PROSITE" id="PS50042">
    <property type="entry name" value="CNMP_BINDING_3"/>
    <property type="match status" value="2"/>
</dbReference>
<dbReference type="PROSITE" id="PS51635">
    <property type="entry name" value="PNPLA"/>
    <property type="match status" value="1"/>
</dbReference>
<dbReference type="PROSITE" id="PS01237">
    <property type="entry name" value="UPF0028"/>
    <property type="match status" value="1"/>
</dbReference>
<name>NTE1_ASPFU</name>
<comment type="function">
    <text evidence="1">Intracellular phospholipase B that catalyzes the double deacylation of phosphatidylcholine (PC) to glycerophosphocholine (GroPCho). Plays an important role in membrane lipid homeostasis. Responsible for the rapid PC turnover in response to inositol, elevated temperatures, or when choline is present in the growth medium (By similarity).</text>
</comment>
<comment type="catalytic activity">
    <reaction>
        <text>a 1-acyl-sn-glycero-3-phosphocholine + H2O = sn-glycerol 3-phosphocholine + a fatty acid + H(+)</text>
        <dbReference type="Rhea" id="RHEA:15177"/>
        <dbReference type="ChEBI" id="CHEBI:15377"/>
        <dbReference type="ChEBI" id="CHEBI:15378"/>
        <dbReference type="ChEBI" id="CHEBI:16870"/>
        <dbReference type="ChEBI" id="CHEBI:28868"/>
        <dbReference type="ChEBI" id="CHEBI:58168"/>
        <dbReference type="EC" id="3.1.1.5"/>
    </reaction>
</comment>
<comment type="activity regulation">
    <text evidence="1">Inhibited by organophosphorus esters.</text>
</comment>
<comment type="subcellular location">
    <subcellularLocation>
        <location evidence="1">Endoplasmic reticulum membrane</location>
        <topology evidence="1">Multi-pass membrane protein</topology>
    </subcellularLocation>
</comment>
<comment type="similarity">
    <text evidence="5">Belongs to the NTE family.</text>
</comment>
<proteinExistence type="inferred from homology"/>
<gene>
    <name type="primary">nte1</name>
    <name type="ORF">AFUA_4G03000</name>
</gene>
<feature type="chain" id="PRO_0000295310" description="Lysophospholipase nte1">
    <location>
        <begin position="1"/>
        <end position="1522"/>
    </location>
</feature>
<feature type="topological domain" description="Cytoplasmic" evidence="1">
    <location>
        <begin position="1"/>
        <end position="65"/>
    </location>
</feature>
<feature type="transmembrane region" description="Helical" evidence="2">
    <location>
        <begin position="66"/>
        <end position="86"/>
    </location>
</feature>
<feature type="topological domain" description="Lumenal" evidence="1">
    <location>
        <begin position="87"/>
        <end position="108"/>
    </location>
</feature>
<feature type="transmembrane region" description="Helical" evidence="2">
    <location>
        <begin position="109"/>
        <end position="129"/>
    </location>
</feature>
<feature type="topological domain" description="Cytoplasmic" evidence="1">
    <location>
        <begin position="130"/>
        <end position="1522"/>
    </location>
</feature>
<feature type="domain" description="PNPLA" evidence="3">
    <location>
        <begin position="1219"/>
        <end position="1383"/>
    </location>
</feature>
<feature type="region of interest" description="Disordered" evidence="4">
    <location>
        <begin position="1"/>
        <end position="24"/>
    </location>
</feature>
<feature type="region of interest" description="Disordered" evidence="4">
    <location>
        <begin position="308"/>
        <end position="384"/>
    </location>
</feature>
<feature type="region of interest" description="Disordered" evidence="4">
    <location>
        <begin position="523"/>
        <end position="544"/>
    </location>
</feature>
<feature type="region of interest" description="Disordered" evidence="4">
    <location>
        <begin position="757"/>
        <end position="776"/>
    </location>
</feature>
<feature type="region of interest" description="Disordered" evidence="4">
    <location>
        <begin position="1501"/>
        <end position="1522"/>
    </location>
</feature>
<feature type="short sequence motif" description="GXGXXG" evidence="3">
    <location>
        <begin position="1223"/>
        <end position="1228"/>
    </location>
</feature>
<feature type="short sequence motif" description="GXSXG" evidence="3">
    <location>
        <begin position="1250"/>
        <end position="1254"/>
    </location>
</feature>
<feature type="short sequence motif" description="DGA/G" evidence="3">
    <location>
        <begin position="1370"/>
        <end position="1372"/>
    </location>
</feature>
<feature type="compositionally biased region" description="Low complexity" evidence="4">
    <location>
        <begin position="15"/>
        <end position="24"/>
    </location>
</feature>
<feature type="compositionally biased region" description="Basic residues" evidence="4">
    <location>
        <begin position="369"/>
        <end position="381"/>
    </location>
</feature>
<feature type="active site" description="Nucleophile" evidence="3">
    <location>
        <position position="1252"/>
    </location>
</feature>
<feature type="active site" description="Proton acceptor" evidence="3">
    <location>
        <position position="1370"/>
    </location>
</feature>
<feature type="binding site">
    <location>
        <begin position="680"/>
        <end position="800"/>
    </location>
    <ligand>
        <name>a nucleoside 3',5'-cyclic phosphate</name>
        <dbReference type="ChEBI" id="CHEBI:58464"/>
        <label>1</label>
    </ligand>
</feature>
<feature type="binding site">
    <location>
        <begin position="840"/>
        <end position="960"/>
    </location>
    <ligand>
        <name>a nucleoside 3',5'-cyclic phosphate</name>
        <dbReference type="ChEBI" id="CHEBI:58464"/>
        <label>2</label>
    </ligand>
</feature>
<protein>
    <recommendedName>
        <fullName>Lysophospholipase nte1</fullName>
        <ecNumber>3.1.1.5</ecNumber>
    </recommendedName>
    <alternativeName>
        <fullName>Intracellular phospholipase B</fullName>
    </alternativeName>
    <alternativeName>
        <fullName>Neuropathy target esterase homolog</fullName>
    </alternativeName>
</protein>
<reference key="1">
    <citation type="journal article" date="2005" name="Nature">
        <title>Genomic sequence of the pathogenic and allergenic filamentous fungus Aspergillus fumigatus.</title>
        <authorList>
            <person name="Nierman W.C."/>
            <person name="Pain A."/>
            <person name="Anderson M.J."/>
            <person name="Wortman J.R."/>
            <person name="Kim H.S."/>
            <person name="Arroyo J."/>
            <person name="Berriman M."/>
            <person name="Abe K."/>
            <person name="Archer D.B."/>
            <person name="Bermejo C."/>
            <person name="Bennett J.W."/>
            <person name="Bowyer P."/>
            <person name="Chen D."/>
            <person name="Collins M."/>
            <person name="Coulsen R."/>
            <person name="Davies R."/>
            <person name="Dyer P.S."/>
            <person name="Farman M.L."/>
            <person name="Fedorova N."/>
            <person name="Fedorova N.D."/>
            <person name="Feldblyum T.V."/>
            <person name="Fischer R."/>
            <person name="Fosker N."/>
            <person name="Fraser A."/>
            <person name="Garcia J.L."/>
            <person name="Garcia M.J."/>
            <person name="Goble A."/>
            <person name="Goldman G.H."/>
            <person name="Gomi K."/>
            <person name="Griffith-Jones S."/>
            <person name="Gwilliam R."/>
            <person name="Haas B.J."/>
            <person name="Haas H."/>
            <person name="Harris D.E."/>
            <person name="Horiuchi H."/>
            <person name="Huang J."/>
            <person name="Humphray S."/>
            <person name="Jimenez J."/>
            <person name="Keller N."/>
            <person name="Khouri H."/>
            <person name="Kitamoto K."/>
            <person name="Kobayashi T."/>
            <person name="Konzack S."/>
            <person name="Kulkarni R."/>
            <person name="Kumagai T."/>
            <person name="Lafton A."/>
            <person name="Latge J.-P."/>
            <person name="Li W."/>
            <person name="Lord A."/>
            <person name="Lu C."/>
            <person name="Majoros W.H."/>
            <person name="May G.S."/>
            <person name="Miller B.L."/>
            <person name="Mohamoud Y."/>
            <person name="Molina M."/>
            <person name="Monod M."/>
            <person name="Mouyna I."/>
            <person name="Mulligan S."/>
            <person name="Murphy L.D."/>
            <person name="O'Neil S."/>
            <person name="Paulsen I."/>
            <person name="Penalva M.A."/>
            <person name="Pertea M."/>
            <person name="Price C."/>
            <person name="Pritchard B.L."/>
            <person name="Quail M.A."/>
            <person name="Rabbinowitsch E."/>
            <person name="Rawlins N."/>
            <person name="Rajandream M.A."/>
            <person name="Reichard U."/>
            <person name="Renauld H."/>
            <person name="Robson G.D."/>
            <person name="Rodriguez de Cordoba S."/>
            <person name="Rodriguez-Pena J.M."/>
            <person name="Ronning C.M."/>
            <person name="Rutter S."/>
            <person name="Salzberg S.L."/>
            <person name="Sanchez M."/>
            <person name="Sanchez-Ferrero J.C."/>
            <person name="Saunders D."/>
            <person name="Seeger K."/>
            <person name="Squares R."/>
            <person name="Squares S."/>
            <person name="Takeuchi M."/>
            <person name="Tekaia F."/>
            <person name="Turner G."/>
            <person name="Vazquez de Aldana C.R."/>
            <person name="Weidman J."/>
            <person name="White O."/>
            <person name="Woodward J.R."/>
            <person name="Yu J.-H."/>
            <person name="Fraser C.M."/>
            <person name="Galagan J.E."/>
            <person name="Asai K."/>
            <person name="Machida M."/>
            <person name="Hall N."/>
            <person name="Barrell B.G."/>
            <person name="Denning D.W."/>
        </authorList>
    </citation>
    <scope>NUCLEOTIDE SEQUENCE [LARGE SCALE GENOMIC DNA]</scope>
    <source>
        <strain>ATCC MYA-4609 / CBS 101355 / FGSC A1100 / Af293</strain>
    </source>
</reference>
<accession>Q4WA15</accession>
<organism>
    <name type="scientific">Aspergillus fumigatus (strain ATCC MYA-4609 / CBS 101355 / FGSC A1100 / Af293)</name>
    <name type="common">Neosartorya fumigata</name>
    <dbReference type="NCBI Taxonomy" id="330879"/>
    <lineage>
        <taxon>Eukaryota</taxon>
        <taxon>Fungi</taxon>
        <taxon>Dikarya</taxon>
        <taxon>Ascomycota</taxon>
        <taxon>Pezizomycotina</taxon>
        <taxon>Eurotiomycetes</taxon>
        <taxon>Eurotiomycetidae</taxon>
        <taxon>Eurotiales</taxon>
        <taxon>Aspergillaceae</taxon>
        <taxon>Aspergillus</taxon>
        <taxon>Aspergillus subgen. Fumigati</taxon>
    </lineage>
</organism>
<evidence type="ECO:0000250" key="1"/>
<evidence type="ECO:0000255" key="2"/>
<evidence type="ECO:0000255" key="3">
    <source>
        <dbReference type="PROSITE-ProRule" id="PRU01161"/>
    </source>
</evidence>
<evidence type="ECO:0000256" key="4">
    <source>
        <dbReference type="SAM" id="MobiDB-lite"/>
    </source>
</evidence>
<evidence type="ECO:0000305" key="5"/>
<keyword id="KW-0256">Endoplasmic reticulum</keyword>
<keyword id="KW-0378">Hydrolase</keyword>
<keyword id="KW-0442">Lipid degradation</keyword>
<keyword id="KW-0443">Lipid metabolism</keyword>
<keyword id="KW-0472">Membrane</keyword>
<keyword id="KW-1185">Reference proteome</keyword>
<keyword id="KW-0677">Repeat</keyword>
<keyword id="KW-0812">Transmembrane</keyword>
<keyword id="KW-1133">Transmembrane helix</keyword>
<sequence length="1522" mass="168262">MADGVTQVDSTGLHSFSPSPSLSSSSSLPAVALSLAVSASAVTASYSISHLPPPPLPPVPTTMAGWIGWVFSFFFQVIPSVLYWIITFSTITLPTWLFTLFSMSLTFTMNFTTLLLIVLAVVSTISWFIRYRFLNMYSRLPPEPQRKEPQVDLFPDVQEGDSKPGLANYLDEFLSAIKVFGYLERPVFHELTRTMQTRKLIAGETLMLEEEKGFCLVVDGLVQIFVKSMRDGKSDTDEELHHLGAESSDEEHHIDGKQGYQLLTEVKNGASMSSLFSILSLFTEDIQLRENESSGSSSSSIALRAARVPNSIPTSPRGVMDSPSLGFQDHSDDTSNMITNGELPSVPPLHLGESRTPPSGDQHHQQHHESRKHSSRKRRKSVHPDIVARAMVDTTIAIIPASAFRRLTRVYPRATAHIVQVILTRLQRVTFATAHSYLGLSNEVLGIEKQMTKFTTYDLPNNMRGAALDRLKDKFIKERDRLGSEEVTKGIALHNPSAGRRRRSSSFLRKDAALQAKLMTPRRAATVVTPESAPAEHDTYGVSPGDLLSTIQSSRFGPRYEQPPAKLQTPLAEKENTHFRLPAMQARHTFRRQDTMDEDGLFRECILDCIMKGIGLTSSTRDALRKSNHSGEASPKLLSYDSRRQKAIFTNNAFGFIDPYEGSGDGETESLMSMSVTSAGGTSPVINLREELRNDIEIVYFPKGSVLVEQGERHPGLYYVIDGFLDVGVPIVDKGEDLVGVSKPAASKGSFPTLKRTTTANSVGAGGTAANDSRRRKQSRKSLYLIKPGGIQGYVGAVASYRSYTDVVAKTDVYVGFLPRASLERIAERYPIALLTLAKRLTSILPRLLLHIDFALEWVQVNAGQVIYRQGDESDAIYLVLNGRLRSVLESPGNKLAVVGEYGQGESVGELEVMTESTRPATLHAIRDTELAKFPRSLFNSLAQEHPGITIQVSKLIAQRMRDLVERPVTEKGVERSNAGSVQTATSTVNLRTVGILPVTAGVPVVEFGNRLLHALHQVGVTNGVTSLNQAAILNHLGRHAFSKMGKLKLSQYLADLEEKYGMVLYIADTNVSSPWTQTCITQADCILLVGLAESSPSIGEYERFLLGMKTTARKELVLLHAERYCPPGLTRRWLKNRVWINGGHHHIQMAFRLTAEPTHPETKRFGTVLKQRVQVLQAEIQKYTSRRIRQTPLYSAQSPFKGDFHRLARRLCGRAVGLVLGGGGARGIAHVGVIKALEEAGIPVDIIGGTSIGSFIGALYARDADVVPMYGRAKKFAGRMGSMWRFALDLTYPTVSYTTGHEFNRGIFKTFGDSQIEDFWLEFYCNTTNISKSRPEYHSSGYVWRYVRASMSLAGLIPPICDEGSMLLDGGYIDNLTVDHMKGLGADVIFAVDVGSIDDNTPQVYGDSLSGFWSVFNRWNPFSSCPNPPTLSEIQARLAYVSSIDNLERAKNIPGCLYMRPPIDGYGTLEFGKFDEIYQVGYAFGKQFLEKLKSEGSLPLPEETEEKKKLQRTLAPRRASI</sequence>